<comment type="function">
    <text evidence="4">Tautomerase that converts enol-oxaloacetate, a strong inhibitor of succinate dehydrogenase, to the physiological keto form of oxaloacetate.</text>
</comment>
<comment type="catalytic activity">
    <reaction evidence="4">
        <text>oxaloacetate = enol-oxaloacetate</text>
        <dbReference type="Rhea" id="RHEA:16021"/>
        <dbReference type="ChEBI" id="CHEBI:16452"/>
        <dbReference type="ChEBI" id="CHEBI:17479"/>
        <dbReference type="EC" id="5.3.2.2"/>
    </reaction>
    <physiologicalReaction direction="right-to-left" evidence="4">
        <dbReference type="Rhea" id="RHEA:16023"/>
    </physiologicalReaction>
</comment>
<comment type="cofactor">
    <cofactor evidence="1">
        <name>Mg(2+)</name>
        <dbReference type="ChEBI" id="CHEBI:18420"/>
    </cofactor>
    <cofactor evidence="1">
        <name>Mn(2+)</name>
        <dbReference type="ChEBI" id="CHEBI:29035"/>
    </cofactor>
    <text evidence="1 3">Requires a divalent metal cation for activity (By similarity). Binds copper in vitro (PubMed:20018591).</text>
</comment>
<comment type="biophysicochemical properties">
    <kinetics>
        <KM evidence="4">48.8 uM for enol-oxaloacetate</KM>
        <Vmax evidence="4">8.4 umol/min/mg enzyme</Vmax>
        <text evidence="4">kcat is 3.7 sec(-1) with enol-oxaloacetate as substrate.</text>
    </kinetics>
</comment>
<comment type="subcellular location">
    <subcellularLocation>
        <location evidence="3">Mitochondrion</location>
    </subcellularLocation>
</comment>
<comment type="similarity">
    <text evidence="6">Belongs to the FAH family.</text>
</comment>
<comment type="sequence caution" evidence="6">
    <conflict type="erroneous gene model prediction">
        <sequence resource="EMBL-CDS" id="AEE83668"/>
    </conflict>
</comment>
<comment type="sequence caution" evidence="6">
    <conflict type="erroneous gene model prediction">
        <sequence resource="EMBL-CDS" id="CAB46032"/>
    </conflict>
</comment>
<comment type="sequence caution" evidence="6">
    <conflict type="erroneous gene model prediction">
        <sequence resource="EMBL-CDS" id="CAB78636"/>
    </conflict>
</comment>
<proteinExistence type="evidence at protein level"/>
<feature type="transit peptide" description="Mitochondrion" evidence="2">
    <location>
        <begin position="1"/>
        <end position="30"/>
    </location>
</feature>
<feature type="chain" id="PRO_0000442050" description="Oxaloacetate tautomerase FAHD1, mitochondrial">
    <location>
        <begin position="31"/>
        <end position="223"/>
    </location>
</feature>
<feature type="binding site" evidence="1">
    <location>
        <position position="67"/>
    </location>
    <ligand>
        <name>Mg(2+)</name>
        <dbReference type="ChEBI" id="CHEBI:18420"/>
    </ligand>
</feature>
<feature type="binding site" evidence="1">
    <location>
        <position position="69"/>
    </location>
    <ligand>
        <name>Mg(2+)</name>
        <dbReference type="ChEBI" id="CHEBI:18420"/>
    </ligand>
</feature>
<feature type="binding site" evidence="1">
    <location>
        <position position="98"/>
    </location>
    <ligand>
        <name>Mg(2+)</name>
        <dbReference type="ChEBI" id="CHEBI:18420"/>
    </ligand>
</feature>
<feature type="sequence conflict" description="In Ref. 2; CAB46032/CAB78636/AEE83668." evidence="6" ref="2">
    <location>
        <position position="180"/>
    </location>
</feature>
<gene>
    <name evidence="5" type="primary">FAHD1</name>
    <name evidence="7" type="ordered locus">At4g15940</name>
    <name evidence="8" type="ORF">dl4011w</name>
    <name evidence="9" type="ORF">FCAALL.203</name>
</gene>
<reference key="1">
    <citation type="journal article" date="1998" name="Nature">
        <title>Analysis of 1.9 Mb of contiguous sequence from chromosome 4 of Arabidopsis thaliana.</title>
        <authorList>
            <person name="Bevan M."/>
            <person name="Bancroft I."/>
            <person name="Bent E."/>
            <person name="Love K."/>
            <person name="Goodman H.M."/>
            <person name="Dean C."/>
            <person name="Bergkamp R."/>
            <person name="Dirkse W."/>
            <person name="van Staveren M."/>
            <person name="Stiekema W."/>
            <person name="Drost L."/>
            <person name="Ridley P."/>
            <person name="Hudson S.-A."/>
            <person name="Patel K."/>
            <person name="Murphy G."/>
            <person name="Piffanelli P."/>
            <person name="Wedler H."/>
            <person name="Wedler E."/>
            <person name="Wambutt R."/>
            <person name="Weitzenegger T."/>
            <person name="Pohl T."/>
            <person name="Terryn N."/>
            <person name="Gielen J."/>
            <person name="Villarroel R."/>
            <person name="De Clercq R."/>
            <person name="van Montagu M."/>
            <person name="Lecharny A."/>
            <person name="Aubourg S."/>
            <person name="Gy I."/>
            <person name="Kreis M."/>
            <person name="Lao N."/>
            <person name="Kavanagh T."/>
            <person name="Hempel S."/>
            <person name="Kotter P."/>
            <person name="Entian K.-D."/>
            <person name="Rieger M."/>
            <person name="Schaefer M."/>
            <person name="Funk B."/>
            <person name="Mueller-Auer S."/>
            <person name="Silvey M."/>
            <person name="James R."/>
            <person name="Monfort A."/>
            <person name="Pons A."/>
            <person name="Puigdomenech P."/>
            <person name="Douka A."/>
            <person name="Voukelatou E."/>
            <person name="Milioni D."/>
            <person name="Hatzopoulos P."/>
            <person name="Piravandi E."/>
            <person name="Obermaier B."/>
            <person name="Hilbert H."/>
            <person name="Duesterhoeft A."/>
            <person name="Moores T."/>
            <person name="Jones J.D.G."/>
            <person name="Eneva T."/>
            <person name="Palme K."/>
            <person name="Benes V."/>
            <person name="Rechmann S."/>
            <person name="Ansorge W."/>
            <person name="Cooke R."/>
            <person name="Berger C."/>
            <person name="Delseny M."/>
            <person name="Voet M."/>
            <person name="Volckaert G."/>
            <person name="Mewes H.-W."/>
            <person name="Klosterman S."/>
            <person name="Schueller C."/>
            <person name="Chalwatzis N."/>
        </authorList>
    </citation>
    <scope>NUCLEOTIDE SEQUENCE [LARGE SCALE GENOMIC DNA]</scope>
    <source>
        <strain>cv. Columbia</strain>
    </source>
</reference>
<reference key="2">
    <citation type="journal article" date="1999" name="Nature">
        <title>Sequence and analysis of chromosome 4 of the plant Arabidopsis thaliana.</title>
        <authorList>
            <person name="Mayer K.F.X."/>
            <person name="Schueller C."/>
            <person name="Wambutt R."/>
            <person name="Murphy G."/>
            <person name="Volckaert G."/>
            <person name="Pohl T."/>
            <person name="Duesterhoeft A."/>
            <person name="Stiekema W."/>
            <person name="Entian K.-D."/>
            <person name="Terryn N."/>
            <person name="Harris B."/>
            <person name="Ansorge W."/>
            <person name="Brandt P."/>
            <person name="Grivell L.A."/>
            <person name="Rieger M."/>
            <person name="Weichselgartner M."/>
            <person name="de Simone V."/>
            <person name="Obermaier B."/>
            <person name="Mache R."/>
            <person name="Mueller M."/>
            <person name="Kreis M."/>
            <person name="Delseny M."/>
            <person name="Puigdomenech P."/>
            <person name="Watson M."/>
            <person name="Schmidtheini T."/>
            <person name="Reichert B."/>
            <person name="Portetelle D."/>
            <person name="Perez-Alonso M."/>
            <person name="Boutry M."/>
            <person name="Bancroft I."/>
            <person name="Vos P."/>
            <person name="Hoheisel J."/>
            <person name="Zimmermann W."/>
            <person name="Wedler H."/>
            <person name="Ridley P."/>
            <person name="Langham S.-A."/>
            <person name="McCullagh B."/>
            <person name="Bilham L."/>
            <person name="Robben J."/>
            <person name="van der Schueren J."/>
            <person name="Grymonprez B."/>
            <person name="Chuang Y.-J."/>
            <person name="Vandenbussche F."/>
            <person name="Braeken M."/>
            <person name="Weltjens I."/>
            <person name="Voet M."/>
            <person name="Bastiaens I."/>
            <person name="Aert R."/>
            <person name="Defoor E."/>
            <person name="Weitzenegger T."/>
            <person name="Bothe G."/>
            <person name="Ramsperger U."/>
            <person name="Hilbert H."/>
            <person name="Braun M."/>
            <person name="Holzer E."/>
            <person name="Brandt A."/>
            <person name="Peters S."/>
            <person name="van Staveren M."/>
            <person name="Dirkse W."/>
            <person name="Mooijman P."/>
            <person name="Klein Lankhorst R."/>
            <person name="Rose M."/>
            <person name="Hauf J."/>
            <person name="Koetter P."/>
            <person name="Berneiser S."/>
            <person name="Hempel S."/>
            <person name="Feldpausch M."/>
            <person name="Lamberth S."/>
            <person name="Van den Daele H."/>
            <person name="De Keyser A."/>
            <person name="Buysshaert C."/>
            <person name="Gielen J."/>
            <person name="Villarroel R."/>
            <person name="De Clercq R."/>
            <person name="van Montagu M."/>
            <person name="Rogers J."/>
            <person name="Cronin A."/>
            <person name="Quail M.A."/>
            <person name="Bray-Allen S."/>
            <person name="Clark L."/>
            <person name="Doggett J."/>
            <person name="Hall S."/>
            <person name="Kay M."/>
            <person name="Lennard N."/>
            <person name="McLay K."/>
            <person name="Mayes R."/>
            <person name="Pettett A."/>
            <person name="Rajandream M.A."/>
            <person name="Lyne M."/>
            <person name="Benes V."/>
            <person name="Rechmann S."/>
            <person name="Borkova D."/>
            <person name="Bloecker H."/>
            <person name="Scharfe M."/>
            <person name="Grimm M."/>
            <person name="Loehnert T.-H."/>
            <person name="Dose S."/>
            <person name="de Haan M."/>
            <person name="Maarse A.C."/>
            <person name="Schaefer M."/>
            <person name="Mueller-Auer S."/>
            <person name="Gabel C."/>
            <person name="Fuchs M."/>
            <person name="Fartmann B."/>
            <person name="Granderath K."/>
            <person name="Dauner D."/>
            <person name="Herzl A."/>
            <person name="Neumann S."/>
            <person name="Argiriou A."/>
            <person name="Vitale D."/>
            <person name="Liguori R."/>
            <person name="Piravandi E."/>
            <person name="Massenet O."/>
            <person name="Quigley F."/>
            <person name="Clabauld G."/>
            <person name="Muendlein A."/>
            <person name="Felber R."/>
            <person name="Schnabl S."/>
            <person name="Hiller R."/>
            <person name="Schmidt W."/>
            <person name="Lecharny A."/>
            <person name="Aubourg S."/>
            <person name="Chefdor F."/>
            <person name="Cooke R."/>
            <person name="Berger C."/>
            <person name="Monfort A."/>
            <person name="Casacuberta E."/>
            <person name="Gibbons T."/>
            <person name="Weber N."/>
            <person name="Vandenbol M."/>
            <person name="Bargues M."/>
            <person name="Terol J."/>
            <person name="Torres A."/>
            <person name="Perez-Perez A."/>
            <person name="Purnelle B."/>
            <person name="Bent E."/>
            <person name="Johnson S."/>
            <person name="Tacon D."/>
            <person name="Jesse T."/>
            <person name="Heijnen L."/>
            <person name="Schwarz S."/>
            <person name="Scholler P."/>
            <person name="Heber S."/>
            <person name="Francs P."/>
            <person name="Bielke C."/>
            <person name="Frishman D."/>
            <person name="Haase D."/>
            <person name="Lemcke K."/>
            <person name="Mewes H.-W."/>
            <person name="Stocker S."/>
            <person name="Zaccaria P."/>
            <person name="Bevan M."/>
            <person name="Wilson R.K."/>
            <person name="de la Bastide M."/>
            <person name="Habermann K."/>
            <person name="Parnell L."/>
            <person name="Dedhia N."/>
            <person name="Gnoj L."/>
            <person name="Schutz K."/>
            <person name="Huang E."/>
            <person name="Spiegel L."/>
            <person name="Sekhon M."/>
            <person name="Murray J."/>
            <person name="Sheet P."/>
            <person name="Cordes M."/>
            <person name="Abu-Threideh J."/>
            <person name="Stoneking T."/>
            <person name="Kalicki J."/>
            <person name="Graves T."/>
            <person name="Harmon G."/>
            <person name="Edwards J."/>
            <person name="Latreille P."/>
            <person name="Courtney L."/>
            <person name="Cloud J."/>
            <person name="Abbott A."/>
            <person name="Scott K."/>
            <person name="Johnson D."/>
            <person name="Minx P."/>
            <person name="Bentley D."/>
            <person name="Fulton B."/>
            <person name="Miller N."/>
            <person name="Greco T."/>
            <person name="Kemp K."/>
            <person name="Kramer J."/>
            <person name="Fulton L."/>
            <person name="Mardis E."/>
            <person name="Dante M."/>
            <person name="Pepin K."/>
            <person name="Hillier L.W."/>
            <person name="Nelson J."/>
            <person name="Spieth J."/>
            <person name="Ryan E."/>
            <person name="Andrews S."/>
            <person name="Geisel C."/>
            <person name="Layman D."/>
            <person name="Du H."/>
            <person name="Ali J."/>
            <person name="Berghoff A."/>
            <person name="Jones K."/>
            <person name="Drone K."/>
            <person name="Cotton M."/>
            <person name="Joshu C."/>
            <person name="Antonoiu B."/>
            <person name="Zidanic M."/>
            <person name="Strong C."/>
            <person name="Sun H."/>
            <person name="Lamar B."/>
            <person name="Yordan C."/>
            <person name="Ma P."/>
            <person name="Zhong J."/>
            <person name="Preston R."/>
            <person name="Vil D."/>
            <person name="Shekher M."/>
            <person name="Matero A."/>
            <person name="Shah R."/>
            <person name="Swaby I.K."/>
            <person name="O'Shaughnessy A."/>
            <person name="Rodriguez M."/>
            <person name="Hoffman J."/>
            <person name="Till S."/>
            <person name="Granat S."/>
            <person name="Shohdy N."/>
            <person name="Hasegawa A."/>
            <person name="Hameed A."/>
            <person name="Lodhi M."/>
            <person name="Johnson A."/>
            <person name="Chen E."/>
            <person name="Marra M.A."/>
            <person name="Martienssen R."/>
            <person name="McCombie W.R."/>
        </authorList>
    </citation>
    <scope>NUCLEOTIDE SEQUENCE [LARGE SCALE GENOMIC DNA]</scope>
    <source>
        <strain>cv. Columbia</strain>
    </source>
</reference>
<reference key="3">
    <citation type="journal article" date="2017" name="Plant J.">
        <title>Araport11: a complete reannotation of the Arabidopsis thaliana reference genome.</title>
        <authorList>
            <person name="Cheng C.Y."/>
            <person name="Krishnakumar V."/>
            <person name="Chan A.P."/>
            <person name="Thibaud-Nissen F."/>
            <person name="Schobel S."/>
            <person name="Town C.D."/>
        </authorList>
    </citation>
    <scope>GENOME REANNOTATION</scope>
    <source>
        <strain>cv. Columbia</strain>
    </source>
</reference>
<reference key="4">
    <citation type="journal article" date="2003" name="Science">
        <title>Empirical analysis of transcriptional activity in the Arabidopsis genome.</title>
        <authorList>
            <person name="Yamada K."/>
            <person name="Lim J."/>
            <person name="Dale J.M."/>
            <person name="Chen H."/>
            <person name="Shinn P."/>
            <person name="Palm C.J."/>
            <person name="Southwick A.M."/>
            <person name="Wu H.C."/>
            <person name="Kim C.J."/>
            <person name="Nguyen M."/>
            <person name="Pham P.K."/>
            <person name="Cheuk R.F."/>
            <person name="Karlin-Newmann G."/>
            <person name="Liu S.X."/>
            <person name="Lam B."/>
            <person name="Sakano H."/>
            <person name="Wu T."/>
            <person name="Yu G."/>
            <person name="Miranda M."/>
            <person name="Quach H.L."/>
            <person name="Tripp M."/>
            <person name="Chang C.H."/>
            <person name="Lee J.M."/>
            <person name="Toriumi M.J."/>
            <person name="Chan M.M."/>
            <person name="Tang C.C."/>
            <person name="Onodera C.S."/>
            <person name="Deng J.M."/>
            <person name="Akiyama K."/>
            <person name="Ansari Y."/>
            <person name="Arakawa T."/>
            <person name="Banh J."/>
            <person name="Banno F."/>
            <person name="Bowser L."/>
            <person name="Brooks S.Y."/>
            <person name="Carninci P."/>
            <person name="Chao Q."/>
            <person name="Choy N."/>
            <person name="Enju A."/>
            <person name="Goldsmith A.D."/>
            <person name="Gurjal M."/>
            <person name="Hansen N.F."/>
            <person name="Hayashizaki Y."/>
            <person name="Johnson-Hopson C."/>
            <person name="Hsuan V.W."/>
            <person name="Iida K."/>
            <person name="Karnes M."/>
            <person name="Khan S."/>
            <person name="Koesema E."/>
            <person name="Ishida J."/>
            <person name="Jiang P.X."/>
            <person name="Jones T."/>
            <person name="Kawai J."/>
            <person name="Kamiya A."/>
            <person name="Meyers C."/>
            <person name="Nakajima M."/>
            <person name="Narusaka M."/>
            <person name="Seki M."/>
            <person name="Sakurai T."/>
            <person name="Satou M."/>
            <person name="Tamse R."/>
            <person name="Vaysberg M."/>
            <person name="Wallender E.K."/>
            <person name="Wong C."/>
            <person name="Yamamura Y."/>
            <person name="Yuan S."/>
            <person name="Shinozaki K."/>
            <person name="Davis R.W."/>
            <person name="Theologis A."/>
            <person name="Ecker J.R."/>
        </authorList>
    </citation>
    <scope>NUCLEOTIDE SEQUENCE [LARGE SCALE MRNA]</scope>
    <source>
        <strain>cv. Columbia</strain>
    </source>
</reference>
<reference key="5">
    <citation type="submission" date="2005-01" db="EMBL/GenBank/DDBJ databases">
        <title>Arabidopsis ORF clones.</title>
        <authorList>
            <person name="Cheuk R.F."/>
            <person name="Chen H."/>
            <person name="Kim C.J."/>
            <person name="Shinn P."/>
            <person name="Ecker J.R."/>
        </authorList>
    </citation>
    <scope>NUCLEOTIDE SEQUENCE [LARGE SCALE MRNA]</scope>
    <source>
        <strain>cv. Columbia</strain>
    </source>
</reference>
<reference key="6">
    <citation type="submission" date="2002-03" db="EMBL/GenBank/DDBJ databases">
        <title>Full-length cDNA from Arabidopsis thaliana.</title>
        <authorList>
            <person name="Brover V.V."/>
            <person name="Troukhan M.E."/>
            <person name="Alexandrov N.A."/>
            <person name="Lu Y.-P."/>
            <person name="Flavell R.B."/>
            <person name="Feldmann K.A."/>
        </authorList>
    </citation>
    <scope>NUCLEOTIDE SEQUENCE [LARGE SCALE MRNA]</scope>
</reference>
<reference key="7">
    <citation type="journal article" date="2010" name="Plant Physiol.">
        <title>Divalent metal ions in plant mitochondria and their role in interactions with proteins and oxidative stress-induced damage to respiratory function.</title>
        <authorList>
            <person name="Tan Y.-F."/>
            <person name="O'Toole N."/>
            <person name="Taylor N.L."/>
            <person name="Millar A.H."/>
        </authorList>
    </citation>
    <scope>IDENTIFICATION BY MASS SPECTROMETRY</scope>
    <scope>SUBCELLULAR LOCATION</scope>
</reference>
<reference key="8">
    <citation type="journal article" date="2024" name="Nat. Commun.">
        <title>A universal metabolite repair enzyme removes a strong inhibitor of the TCA cycle.</title>
        <authorList>
            <person name="Zmuda A.J."/>
            <person name="Kang X."/>
            <person name="Wissbroecker K.B."/>
            <person name="Freund Saxhaug K."/>
            <person name="Costa K.C."/>
            <person name="Hegeman A.D."/>
            <person name="Niehaus T.D."/>
        </authorList>
    </citation>
    <scope>FUNCTION</scope>
    <scope>CATALYTIC ACTIVITY</scope>
    <scope>BIOPHYSICOCHEMICAL PROPERTIES</scope>
</reference>
<accession>Q93ZE5</accession>
<accession>O23443</accession>
<evidence type="ECO:0000250" key="1">
    <source>
        <dbReference type="UniProtKB" id="Q6P587"/>
    </source>
</evidence>
<evidence type="ECO:0000255" key="2"/>
<evidence type="ECO:0000269" key="3">
    <source>
    </source>
</evidence>
<evidence type="ECO:0000269" key="4">
    <source>
    </source>
</evidence>
<evidence type="ECO:0000303" key="5">
    <source>
    </source>
</evidence>
<evidence type="ECO:0000305" key="6"/>
<evidence type="ECO:0000312" key="7">
    <source>
        <dbReference type="Araport" id="AT4G15940"/>
    </source>
</evidence>
<evidence type="ECO:0000312" key="8">
    <source>
        <dbReference type="EMBL" id="CAB46032.1"/>
    </source>
</evidence>
<evidence type="ECO:0000312" key="9">
    <source>
        <dbReference type="EMBL" id="CAB78636.1"/>
    </source>
</evidence>
<name>FAHD1_ARATH</name>
<dbReference type="EC" id="5.3.2.2" evidence="4"/>
<dbReference type="EMBL" id="Z97340">
    <property type="protein sequence ID" value="CAB46032.1"/>
    <property type="status" value="ALT_SEQ"/>
    <property type="molecule type" value="Genomic_DNA"/>
</dbReference>
<dbReference type="EMBL" id="AL161542">
    <property type="protein sequence ID" value="CAB78636.1"/>
    <property type="status" value="ALT_SEQ"/>
    <property type="molecule type" value="Genomic_DNA"/>
</dbReference>
<dbReference type="EMBL" id="CP002687">
    <property type="protein sequence ID" value="AEE83668.1"/>
    <property type="status" value="ALT_SEQ"/>
    <property type="molecule type" value="Genomic_DNA"/>
</dbReference>
<dbReference type="EMBL" id="AY057593">
    <property type="protein sequence ID" value="AAL14388.1"/>
    <property type="molecule type" value="mRNA"/>
</dbReference>
<dbReference type="EMBL" id="BT020563">
    <property type="protein sequence ID" value="AAW70409.1"/>
    <property type="molecule type" value="mRNA"/>
</dbReference>
<dbReference type="EMBL" id="AY088072">
    <property type="protein sequence ID" value="AAM65618.1"/>
    <property type="molecule type" value="mRNA"/>
</dbReference>
<dbReference type="PIR" id="F85176">
    <property type="entry name" value="F85176"/>
</dbReference>
<dbReference type="RefSeq" id="NP_193329.1">
    <property type="nucleotide sequence ID" value="NM_117686.5"/>
</dbReference>
<dbReference type="SMR" id="Q93ZE5"/>
<dbReference type="FunCoup" id="Q93ZE5">
    <property type="interactions" value="2308"/>
</dbReference>
<dbReference type="STRING" id="3702.Q93ZE5"/>
<dbReference type="PaxDb" id="3702-AT4G15940.1"/>
<dbReference type="PeptideAtlas" id="Q93ZE5"/>
<dbReference type="ProteomicsDB" id="230956"/>
<dbReference type="GeneID" id="827276"/>
<dbReference type="KEGG" id="ath:AT4G15940"/>
<dbReference type="Araport" id="AT4G15940"/>
<dbReference type="TAIR" id="AT4G15940"/>
<dbReference type="eggNOG" id="KOG1535">
    <property type="taxonomic scope" value="Eukaryota"/>
</dbReference>
<dbReference type="InParanoid" id="Q93ZE5"/>
<dbReference type="OrthoDB" id="411064at2759"/>
<dbReference type="PRO" id="PR:Q93ZE5"/>
<dbReference type="Proteomes" id="UP000006548">
    <property type="component" value="Chromosome 4"/>
</dbReference>
<dbReference type="ExpressionAtlas" id="Q93ZE5">
    <property type="expression patterns" value="baseline and differential"/>
</dbReference>
<dbReference type="GO" id="GO:0005829">
    <property type="term" value="C:cytosol"/>
    <property type="evidence" value="ECO:0007005"/>
    <property type="project" value="TAIR"/>
</dbReference>
<dbReference type="GO" id="GO:0005739">
    <property type="term" value="C:mitochondrion"/>
    <property type="evidence" value="ECO:0000314"/>
    <property type="project" value="UniProtKB"/>
</dbReference>
<dbReference type="GO" id="GO:0018773">
    <property type="term" value="F:acetylpyruvate hydrolase activity"/>
    <property type="evidence" value="ECO:0000318"/>
    <property type="project" value="GO_Central"/>
</dbReference>
<dbReference type="GO" id="GO:0047621">
    <property type="term" value="F:acylpyruvate hydrolase activity"/>
    <property type="evidence" value="ECO:0007669"/>
    <property type="project" value="UniProtKB-EC"/>
</dbReference>
<dbReference type="GO" id="GO:0005507">
    <property type="term" value="F:copper ion binding"/>
    <property type="evidence" value="ECO:0000314"/>
    <property type="project" value="UniProtKB"/>
</dbReference>
<dbReference type="GO" id="GO:0050163">
    <property type="term" value="F:oxaloacetate tautomerase activity"/>
    <property type="evidence" value="ECO:0000314"/>
    <property type="project" value="UniProtKB"/>
</dbReference>
<dbReference type="GO" id="GO:0006107">
    <property type="term" value="P:oxaloacetate metabolic process"/>
    <property type="evidence" value="ECO:0000314"/>
    <property type="project" value="UniProtKB"/>
</dbReference>
<dbReference type="FunFam" id="3.90.850.10:FF:000003">
    <property type="entry name" value="Fumarylacetoacetate hydrolase domain-containing 1"/>
    <property type="match status" value="1"/>
</dbReference>
<dbReference type="Gene3D" id="3.90.850.10">
    <property type="entry name" value="Fumarylacetoacetase-like, C-terminal domain"/>
    <property type="match status" value="1"/>
</dbReference>
<dbReference type="InterPro" id="IPR011234">
    <property type="entry name" value="Fumarylacetoacetase-like_C"/>
</dbReference>
<dbReference type="InterPro" id="IPR036663">
    <property type="entry name" value="Fumarylacetoacetase_C_sf"/>
</dbReference>
<dbReference type="NCBIfam" id="NF007967">
    <property type="entry name" value="PRK10691.1"/>
    <property type="match status" value="1"/>
</dbReference>
<dbReference type="PANTHER" id="PTHR11820">
    <property type="entry name" value="ACYLPYRUVASE"/>
    <property type="match status" value="1"/>
</dbReference>
<dbReference type="PANTHER" id="PTHR11820:SF7">
    <property type="entry name" value="ACYLPYRUVASE FAHD1, MITOCHONDRIAL"/>
    <property type="match status" value="1"/>
</dbReference>
<dbReference type="Pfam" id="PF01557">
    <property type="entry name" value="FAA_hydrolase"/>
    <property type="match status" value="1"/>
</dbReference>
<dbReference type="SUPFAM" id="SSF56529">
    <property type="entry name" value="FAH"/>
    <property type="match status" value="1"/>
</dbReference>
<organism>
    <name type="scientific">Arabidopsis thaliana</name>
    <name type="common">Mouse-ear cress</name>
    <dbReference type="NCBI Taxonomy" id="3702"/>
    <lineage>
        <taxon>Eukaryota</taxon>
        <taxon>Viridiplantae</taxon>
        <taxon>Streptophyta</taxon>
        <taxon>Embryophyta</taxon>
        <taxon>Tracheophyta</taxon>
        <taxon>Spermatophyta</taxon>
        <taxon>Magnoliopsida</taxon>
        <taxon>eudicotyledons</taxon>
        <taxon>Gunneridae</taxon>
        <taxon>Pentapetalae</taxon>
        <taxon>rosids</taxon>
        <taxon>malvids</taxon>
        <taxon>Brassicales</taxon>
        <taxon>Brassicaceae</taxon>
        <taxon>Camelineae</taxon>
        <taxon>Arabidopsis</taxon>
    </lineage>
</organism>
<keyword id="KW-0413">Isomerase</keyword>
<keyword id="KW-0460">Magnesium</keyword>
<keyword id="KW-0479">Metal-binding</keyword>
<keyword id="KW-0496">Mitochondrion</keyword>
<keyword id="KW-1185">Reference proteome</keyword>
<keyword id="KW-0809">Transit peptide</keyword>
<sequence>MATSMIQRMFKQGTKIVCVGRNYAAHAKELGNAVPKEPVIFLKPTSSYLENGGTIEIPHPLDSLHHEVELALVIGQKARDVPESIAMDYIGGYAVALDMTARELQASAKASGLPWTVAKGQDTFTPISSVLPKAMVRDPDNLELWLKVDGETRQKGLTKDMIFKVPYLISYISSIMTLYEGDVILTGTPEGVGPVKIGQKITAGITGLSEVQFDVERRVKPLS</sequence>
<protein>
    <recommendedName>
        <fullName evidence="6">Oxaloacetate tautomerase FAHD1, mitochondrial</fullName>
        <ecNumber evidence="4">5.3.2.2</ecNumber>
    </recommendedName>
    <alternativeName>
        <fullName evidence="6">Fumarylacetoacetate hydrolase domain-containing protein 1</fullName>
        <shortName evidence="6">FAH domain-containing protein 1</shortName>
    </alternativeName>
</protein>